<dbReference type="EMBL" id="AE003852">
    <property type="protein sequence ID" value="AAF95239.1"/>
    <property type="status" value="ALT_INIT"/>
    <property type="molecule type" value="Genomic_DNA"/>
</dbReference>
<dbReference type="PIR" id="C82119">
    <property type="entry name" value="C82119"/>
</dbReference>
<dbReference type="RefSeq" id="NP_231725.1">
    <property type="nucleotide sequence ID" value="NC_002505.1"/>
</dbReference>
<dbReference type="RefSeq" id="WP_001061710.1">
    <property type="nucleotide sequence ID" value="NZ_LT906614.1"/>
</dbReference>
<dbReference type="SMR" id="Q9KQA7"/>
<dbReference type="STRING" id="243277.VC_2093"/>
<dbReference type="DNASU" id="2613349"/>
<dbReference type="EnsemblBacteria" id="AAF95239">
    <property type="protein sequence ID" value="AAF95239"/>
    <property type="gene ID" value="VC_2093"/>
</dbReference>
<dbReference type="KEGG" id="vch:VC_2093"/>
<dbReference type="PATRIC" id="fig|243277.26.peg.2000"/>
<dbReference type="eggNOG" id="COG0327">
    <property type="taxonomic scope" value="Bacteria"/>
</dbReference>
<dbReference type="HOGENOM" id="CLU_037423_3_0_6"/>
<dbReference type="Proteomes" id="UP000000584">
    <property type="component" value="Chromosome 1"/>
</dbReference>
<dbReference type="GO" id="GO:0005737">
    <property type="term" value="C:cytoplasm"/>
    <property type="evidence" value="ECO:0000318"/>
    <property type="project" value="GO_Central"/>
</dbReference>
<dbReference type="GO" id="GO:0046872">
    <property type="term" value="F:metal ion binding"/>
    <property type="evidence" value="ECO:0007669"/>
    <property type="project" value="UniProtKB-KW"/>
</dbReference>
<dbReference type="FunFam" id="3.40.1390.30:FF:000002">
    <property type="entry name" value="Nif3-like dinuclear metal center protein"/>
    <property type="match status" value="1"/>
</dbReference>
<dbReference type="Gene3D" id="3.40.1390.30">
    <property type="entry name" value="NIF3 (NGG1p interacting factor 3)-like"/>
    <property type="match status" value="2"/>
</dbReference>
<dbReference type="InterPro" id="IPR002678">
    <property type="entry name" value="DUF34/NIF3"/>
</dbReference>
<dbReference type="InterPro" id="IPR036069">
    <property type="entry name" value="DUF34/NIF3_sf"/>
</dbReference>
<dbReference type="NCBIfam" id="TIGR00486">
    <property type="entry name" value="YbgI_SA1388"/>
    <property type="match status" value="1"/>
</dbReference>
<dbReference type="PANTHER" id="PTHR13799:SF14">
    <property type="entry name" value="GTP CYCLOHYDROLASE 1 TYPE 2 HOMOLOG"/>
    <property type="match status" value="1"/>
</dbReference>
<dbReference type="PANTHER" id="PTHR13799">
    <property type="entry name" value="NGG1 INTERACTING FACTOR 3"/>
    <property type="match status" value="1"/>
</dbReference>
<dbReference type="Pfam" id="PF01784">
    <property type="entry name" value="DUF34_NIF3"/>
    <property type="match status" value="1"/>
</dbReference>
<dbReference type="SUPFAM" id="SSF102705">
    <property type="entry name" value="NIF3 (NGG1p interacting factor 3)-like"/>
    <property type="match status" value="1"/>
</dbReference>
<reference key="1">
    <citation type="journal article" date="2000" name="Nature">
        <title>DNA sequence of both chromosomes of the cholera pathogen Vibrio cholerae.</title>
        <authorList>
            <person name="Heidelberg J.F."/>
            <person name="Eisen J.A."/>
            <person name="Nelson W.C."/>
            <person name="Clayton R.A."/>
            <person name="Gwinn M.L."/>
            <person name="Dodson R.J."/>
            <person name="Haft D.H."/>
            <person name="Hickey E.K."/>
            <person name="Peterson J.D."/>
            <person name="Umayam L.A."/>
            <person name="Gill S.R."/>
            <person name="Nelson K.E."/>
            <person name="Read T.D."/>
            <person name="Tettelin H."/>
            <person name="Richardson D.L."/>
            <person name="Ermolaeva M.D."/>
            <person name="Vamathevan J.J."/>
            <person name="Bass S."/>
            <person name="Qin H."/>
            <person name="Dragoi I."/>
            <person name="Sellers P."/>
            <person name="McDonald L.A."/>
            <person name="Utterback T.R."/>
            <person name="Fleischmann R.D."/>
            <person name="Nierman W.C."/>
            <person name="White O."/>
            <person name="Salzberg S.L."/>
            <person name="Smith H.O."/>
            <person name="Colwell R.R."/>
            <person name="Mekalanos J.J."/>
            <person name="Venter J.C."/>
            <person name="Fraser C.M."/>
        </authorList>
    </citation>
    <scope>NUCLEOTIDE SEQUENCE [LARGE SCALE GENOMIC DNA]</scope>
    <source>
        <strain>ATCC 39315 / El Tor Inaba N16961</strain>
    </source>
</reference>
<gene>
    <name type="ordered locus">VC_2093</name>
</gene>
<feature type="chain" id="PRO_0000147343" description="GTP cyclohydrolase 1 type 2 homolog">
    <location>
        <begin position="1"/>
        <end position="252"/>
    </location>
</feature>
<feature type="binding site" evidence="1">
    <location>
        <position position="63"/>
    </location>
    <ligand>
        <name>a divalent metal cation</name>
        <dbReference type="ChEBI" id="CHEBI:60240"/>
        <label>1</label>
    </ligand>
</feature>
<feature type="binding site" evidence="1">
    <location>
        <position position="64"/>
    </location>
    <ligand>
        <name>a divalent metal cation</name>
        <dbReference type="ChEBI" id="CHEBI:60240"/>
        <label>2</label>
    </ligand>
</feature>
<feature type="binding site" evidence="1">
    <location>
        <position position="101"/>
    </location>
    <ligand>
        <name>a divalent metal cation</name>
        <dbReference type="ChEBI" id="CHEBI:60240"/>
        <label>1</label>
    </ligand>
</feature>
<feature type="binding site" evidence="1">
    <location>
        <position position="220"/>
    </location>
    <ligand>
        <name>a divalent metal cation</name>
        <dbReference type="ChEBI" id="CHEBI:60240"/>
        <label>2</label>
    </ligand>
</feature>
<feature type="binding site" evidence="1">
    <location>
        <position position="224"/>
    </location>
    <ligand>
        <name>a divalent metal cation</name>
        <dbReference type="ChEBI" id="CHEBI:60240"/>
        <label>1</label>
    </ligand>
</feature>
<feature type="binding site" evidence="1">
    <location>
        <position position="224"/>
    </location>
    <ligand>
        <name>a divalent metal cation</name>
        <dbReference type="ChEBI" id="CHEBI:60240"/>
        <label>2</label>
    </ligand>
</feature>
<comment type="subunit">
    <text evidence="1">Homohexamer.</text>
</comment>
<comment type="similarity">
    <text evidence="2">Belongs to the GTP cyclohydrolase I type 2/NIF3 family.</text>
</comment>
<comment type="sequence caution" evidence="2">
    <conflict type="erroneous initiation">
        <sequence resource="EMBL-CDS" id="AAF95239"/>
    </conflict>
</comment>
<name>GCH1L_VIBCH</name>
<sequence>MNNLQLEALLNETLSPQLIKDYCPNGLQVEGKVEVKRIVTGVTASMALIEAAIELKADALLVHHGYFWKNEPEAIRGMKGRRIRTLIQNDLNLYAYHLPLDIHPQLGNNAQLAQRLGICVDGGLEGHPQSVAMFGHFLQPLTGEELAHRIGQVLNRTPLHIAPDQADKLIETVGWCTGGGQDYIELAASRGLDAFISGEISERTTYSAREQSIHYFSAGHHATERYGIKALGEWLAENHGFDVTFIDIDNPV</sequence>
<keyword id="KW-0479">Metal-binding</keyword>
<keyword id="KW-1185">Reference proteome</keyword>
<proteinExistence type="inferred from homology"/>
<evidence type="ECO:0000250" key="1">
    <source>
        <dbReference type="UniProtKB" id="P0AFP6"/>
    </source>
</evidence>
<evidence type="ECO:0000305" key="2"/>
<organism>
    <name type="scientific">Vibrio cholerae serotype O1 (strain ATCC 39315 / El Tor Inaba N16961)</name>
    <dbReference type="NCBI Taxonomy" id="243277"/>
    <lineage>
        <taxon>Bacteria</taxon>
        <taxon>Pseudomonadati</taxon>
        <taxon>Pseudomonadota</taxon>
        <taxon>Gammaproteobacteria</taxon>
        <taxon>Vibrionales</taxon>
        <taxon>Vibrionaceae</taxon>
        <taxon>Vibrio</taxon>
    </lineage>
</organism>
<accession>Q9KQA7</accession>
<protein>
    <recommendedName>
        <fullName>GTP cyclohydrolase 1 type 2 homolog</fullName>
    </recommendedName>
</protein>